<feature type="chain" id="PRO_0000352146" description="Small ribosomal subunit protein uS2c">
    <location>
        <begin position="1"/>
        <end position="246"/>
    </location>
</feature>
<gene>
    <name type="primary">rps2</name>
</gene>
<proteinExistence type="inferred from homology"/>
<comment type="subcellular location">
    <subcellularLocation>
        <location>Plastid</location>
        <location>Chloroplast</location>
    </subcellularLocation>
</comment>
<comment type="similarity">
    <text evidence="1">Belongs to the universal ribosomal protein uS2 family.</text>
</comment>
<name>RR2_PELHO</name>
<sequence>MTKRSWNIRLEDMVAARVHLGHDIKKRNPRMAPYISAKLKDTDITNLKKTARFLSETCDLVFEAASKGKKFLIVGTKKEVANSVAQAARTAGCHYVNQKWLGGMLTNWSTTKKRLHKFRDLIRQQGRLNRLPKRDAAILKRQLFHLQKSLGGVKYMKELPDIVIILDQHGEFTALRECISLRIPTIGLIDTNCDPDLVDLPIPANDDSIPSIRFILNKLILAICKGRSRRTITSRPSHIKKKEKNR</sequence>
<reference key="1">
    <citation type="journal article" date="2006" name="Mol. Biol. Evol.">
        <title>The complete chloroplast genome sequence of Pelargonium x hortorum: organization and evolution of the largest and most highly rearranged chloroplast genome of land plants.</title>
        <authorList>
            <person name="Chumley T.W."/>
            <person name="Palmer J.D."/>
            <person name="Mower J.P."/>
            <person name="Fourcade H.M."/>
            <person name="Calie P.J."/>
            <person name="Boore J.L."/>
            <person name="Jansen R.K."/>
        </authorList>
    </citation>
    <scope>NUCLEOTIDE SEQUENCE [LARGE SCALE GENOMIC DNA]</scope>
    <source>
        <strain>cv. Ringo White</strain>
    </source>
</reference>
<geneLocation type="chloroplast"/>
<organism>
    <name type="scientific">Pelargonium hortorum</name>
    <name type="common">Common geranium</name>
    <name type="synonym">Pelargonium inquinans x Pelargonium zonale</name>
    <dbReference type="NCBI Taxonomy" id="4031"/>
    <lineage>
        <taxon>Eukaryota</taxon>
        <taxon>Viridiplantae</taxon>
        <taxon>Streptophyta</taxon>
        <taxon>Embryophyta</taxon>
        <taxon>Tracheophyta</taxon>
        <taxon>Spermatophyta</taxon>
        <taxon>Magnoliopsida</taxon>
        <taxon>eudicotyledons</taxon>
        <taxon>Gunneridae</taxon>
        <taxon>Pentapetalae</taxon>
        <taxon>rosids</taxon>
        <taxon>malvids</taxon>
        <taxon>Geraniales</taxon>
        <taxon>Geraniaceae</taxon>
        <taxon>Pelargonium</taxon>
    </lineage>
</organism>
<protein>
    <recommendedName>
        <fullName evidence="1">Small ribosomal subunit protein uS2c</fullName>
    </recommendedName>
    <alternativeName>
        <fullName>30S ribosomal protein S2, chloroplastic</fullName>
    </alternativeName>
</protein>
<keyword id="KW-0150">Chloroplast</keyword>
<keyword id="KW-0934">Plastid</keyword>
<keyword id="KW-0687">Ribonucleoprotein</keyword>
<keyword id="KW-0689">Ribosomal protein</keyword>
<accession>Q06FX2</accession>
<evidence type="ECO:0000305" key="1"/>
<dbReference type="EMBL" id="DQ897681">
    <property type="protein sequence ID" value="ABI17250.1"/>
    <property type="molecule type" value="Genomic_DNA"/>
</dbReference>
<dbReference type="RefSeq" id="YP_784059.1">
    <property type="nucleotide sequence ID" value="NC_008454.1"/>
</dbReference>
<dbReference type="SMR" id="Q06FX2"/>
<dbReference type="GeneID" id="4362769"/>
<dbReference type="GO" id="GO:0009507">
    <property type="term" value="C:chloroplast"/>
    <property type="evidence" value="ECO:0007669"/>
    <property type="project" value="UniProtKB-SubCell"/>
</dbReference>
<dbReference type="GO" id="GO:0005763">
    <property type="term" value="C:mitochondrial small ribosomal subunit"/>
    <property type="evidence" value="ECO:0007669"/>
    <property type="project" value="TreeGrafter"/>
</dbReference>
<dbReference type="GO" id="GO:0003735">
    <property type="term" value="F:structural constituent of ribosome"/>
    <property type="evidence" value="ECO:0007669"/>
    <property type="project" value="InterPro"/>
</dbReference>
<dbReference type="GO" id="GO:0006412">
    <property type="term" value="P:translation"/>
    <property type="evidence" value="ECO:0007669"/>
    <property type="project" value="UniProtKB-UniRule"/>
</dbReference>
<dbReference type="CDD" id="cd01425">
    <property type="entry name" value="RPS2"/>
    <property type="match status" value="1"/>
</dbReference>
<dbReference type="FunFam" id="1.10.287.610:FF:000001">
    <property type="entry name" value="30S ribosomal protein S2"/>
    <property type="match status" value="1"/>
</dbReference>
<dbReference type="Gene3D" id="3.40.50.10490">
    <property type="entry name" value="Glucose-6-phosphate isomerase like protein, domain 1"/>
    <property type="match status" value="1"/>
</dbReference>
<dbReference type="Gene3D" id="1.10.287.610">
    <property type="entry name" value="Helix hairpin bin"/>
    <property type="match status" value="1"/>
</dbReference>
<dbReference type="HAMAP" id="MF_00291_B">
    <property type="entry name" value="Ribosomal_uS2_B"/>
    <property type="match status" value="1"/>
</dbReference>
<dbReference type="InterPro" id="IPR001865">
    <property type="entry name" value="Ribosomal_uS2"/>
</dbReference>
<dbReference type="InterPro" id="IPR005706">
    <property type="entry name" value="Ribosomal_uS2_bac/mit/plastid"/>
</dbReference>
<dbReference type="InterPro" id="IPR018130">
    <property type="entry name" value="Ribosomal_uS2_CS"/>
</dbReference>
<dbReference type="InterPro" id="IPR023591">
    <property type="entry name" value="Ribosomal_uS2_flav_dom_sf"/>
</dbReference>
<dbReference type="NCBIfam" id="TIGR01011">
    <property type="entry name" value="rpsB_bact"/>
    <property type="match status" value="1"/>
</dbReference>
<dbReference type="PANTHER" id="PTHR12534">
    <property type="entry name" value="30S RIBOSOMAL PROTEIN S2 PROKARYOTIC AND ORGANELLAR"/>
    <property type="match status" value="1"/>
</dbReference>
<dbReference type="PANTHER" id="PTHR12534:SF0">
    <property type="entry name" value="SMALL RIBOSOMAL SUBUNIT PROTEIN US2M"/>
    <property type="match status" value="1"/>
</dbReference>
<dbReference type="Pfam" id="PF00318">
    <property type="entry name" value="Ribosomal_S2"/>
    <property type="match status" value="1"/>
</dbReference>
<dbReference type="PRINTS" id="PR00395">
    <property type="entry name" value="RIBOSOMALS2"/>
</dbReference>
<dbReference type="SUPFAM" id="SSF52313">
    <property type="entry name" value="Ribosomal protein S2"/>
    <property type="match status" value="1"/>
</dbReference>
<dbReference type="PROSITE" id="PS00962">
    <property type="entry name" value="RIBOSOMAL_S2_1"/>
    <property type="match status" value="1"/>
</dbReference>
<dbReference type="PROSITE" id="PS00963">
    <property type="entry name" value="RIBOSOMAL_S2_2"/>
    <property type="match status" value="1"/>
</dbReference>